<evidence type="ECO:0000250" key="1"/>
<evidence type="ECO:0000255" key="2"/>
<evidence type="ECO:0000269" key="3">
    <source>
    </source>
</evidence>
<accession>D4AIK6</accession>
<proteinExistence type="evidence at protein level"/>
<organism>
    <name type="scientific">Arthroderma benhamiae (strain ATCC MYA-4681 / CBS 112371)</name>
    <name type="common">Trichophyton mentagrophytes</name>
    <dbReference type="NCBI Taxonomy" id="663331"/>
    <lineage>
        <taxon>Eukaryota</taxon>
        <taxon>Fungi</taxon>
        <taxon>Dikarya</taxon>
        <taxon>Ascomycota</taxon>
        <taxon>Pezizomycotina</taxon>
        <taxon>Eurotiomycetes</taxon>
        <taxon>Eurotiomycetidae</taxon>
        <taxon>Onygenales</taxon>
        <taxon>Arthrodermataceae</taxon>
        <taxon>Trichophyton</taxon>
    </lineage>
</organism>
<keyword id="KW-0106">Calcium</keyword>
<keyword id="KW-0325">Glycoprotein</keyword>
<keyword id="KW-0378">Hydrolase</keyword>
<keyword id="KW-0479">Metal-binding</keyword>
<keyword id="KW-0645">Protease</keyword>
<keyword id="KW-1185">Reference proteome</keyword>
<keyword id="KW-0964">Secreted</keyword>
<keyword id="KW-0720">Serine protease</keyword>
<keyword id="KW-0732">Signal</keyword>
<keyword id="KW-0843">Virulence</keyword>
<keyword id="KW-0865">Zymogen</keyword>
<dbReference type="EC" id="3.4.14.10"/>
<dbReference type="EMBL" id="ABSU01000001">
    <property type="protein sequence ID" value="EFE36579.1"/>
    <property type="molecule type" value="Genomic_DNA"/>
</dbReference>
<dbReference type="RefSeq" id="XP_003017224.1">
    <property type="nucleotide sequence ID" value="XM_003017178.1"/>
</dbReference>
<dbReference type="SMR" id="D4AIK6"/>
<dbReference type="GlyCosmos" id="D4AIK6">
    <property type="glycosylation" value="5 sites, No reported glycans"/>
</dbReference>
<dbReference type="GeneID" id="9522308"/>
<dbReference type="KEGG" id="abe:ARB_04101"/>
<dbReference type="eggNOG" id="ENOG502QR6D">
    <property type="taxonomic scope" value="Eukaryota"/>
</dbReference>
<dbReference type="HOGENOM" id="CLU_013783_3_0_1"/>
<dbReference type="OMA" id="VTITPDC"/>
<dbReference type="OrthoDB" id="409122at2759"/>
<dbReference type="Proteomes" id="UP000008866">
    <property type="component" value="Unassembled WGS sequence"/>
</dbReference>
<dbReference type="GO" id="GO:0005576">
    <property type="term" value="C:extracellular region"/>
    <property type="evidence" value="ECO:0007669"/>
    <property type="project" value="UniProtKB-SubCell"/>
</dbReference>
<dbReference type="GO" id="GO:0046872">
    <property type="term" value="F:metal ion binding"/>
    <property type="evidence" value="ECO:0007669"/>
    <property type="project" value="UniProtKB-KW"/>
</dbReference>
<dbReference type="GO" id="GO:0004252">
    <property type="term" value="F:serine-type endopeptidase activity"/>
    <property type="evidence" value="ECO:0007669"/>
    <property type="project" value="InterPro"/>
</dbReference>
<dbReference type="GO" id="GO:0008240">
    <property type="term" value="F:tripeptidyl-peptidase activity"/>
    <property type="evidence" value="ECO:0007669"/>
    <property type="project" value="UniProtKB-EC"/>
</dbReference>
<dbReference type="GO" id="GO:0006508">
    <property type="term" value="P:proteolysis"/>
    <property type="evidence" value="ECO:0007669"/>
    <property type="project" value="UniProtKB-KW"/>
</dbReference>
<dbReference type="CDD" id="cd04056">
    <property type="entry name" value="Peptidases_S53"/>
    <property type="match status" value="1"/>
</dbReference>
<dbReference type="CDD" id="cd11377">
    <property type="entry name" value="Pro-peptidase_S53"/>
    <property type="match status" value="1"/>
</dbReference>
<dbReference type="FunFam" id="3.40.50.200:FF:000015">
    <property type="entry name" value="Tripeptidyl peptidase A"/>
    <property type="match status" value="1"/>
</dbReference>
<dbReference type="Gene3D" id="3.40.50.200">
    <property type="entry name" value="Peptidase S8/S53 domain"/>
    <property type="match status" value="1"/>
</dbReference>
<dbReference type="InterPro" id="IPR000209">
    <property type="entry name" value="Peptidase_S8/S53_dom"/>
</dbReference>
<dbReference type="InterPro" id="IPR036852">
    <property type="entry name" value="Peptidase_S8/S53_dom_sf"/>
</dbReference>
<dbReference type="InterPro" id="IPR023828">
    <property type="entry name" value="Peptidase_S8_Ser-AS"/>
</dbReference>
<dbReference type="InterPro" id="IPR015366">
    <property type="entry name" value="S53_propep"/>
</dbReference>
<dbReference type="InterPro" id="IPR030400">
    <property type="entry name" value="Sedolisin_dom"/>
</dbReference>
<dbReference type="InterPro" id="IPR050819">
    <property type="entry name" value="Tripeptidyl-peptidase_I"/>
</dbReference>
<dbReference type="PANTHER" id="PTHR14218">
    <property type="entry name" value="PROTEASE S8 TRIPEPTIDYL PEPTIDASE I CLN2"/>
    <property type="match status" value="1"/>
</dbReference>
<dbReference type="PANTHER" id="PTHR14218:SF32">
    <property type="entry name" value="TRIPEPTIDYL PEPTIDASE SED3 (AFU_ORTHOLOGUE AFUA_3G08930)"/>
    <property type="match status" value="1"/>
</dbReference>
<dbReference type="Pfam" id="PF00082">
    <property type="entry name" value="Peptidase_S8"/>
    <property type="match status" value="1"/>
</dbReference>
<dbReference type="Pfam" id="PF09286">
    <property type="entry name" value="Pro-kuma_activ"/>
    <property type="match status" value="1"/>
</dbReference>
<dbReference type="SMART" id="SM00944">
    <property type="entry name" value="Pro-kuma_activ"/>
    <property type="match status" value="1"/>
</dbReference>
<dbReference type="SUPFAM" id="SSF54897">
    <property type="entry name" value="Protease propeptides/inhibitors"/>
    <property type="match status" value="1"/>
</dbReference>
<dbReference type="SUPFAM" id="SSF52743">
    <property type="entry name" value="Subtilisin-like"/>
    <property type="match status" value="1"/>
</dbReference>
<dbReference type="PROSITE" id="PS51695">
    <property type="entry name" value="SEDOLISIN"/>
    <property type="match status" value="1"/>
</dbReference>
<reference key="1">
    <citation type="journal article" date="2011" name="Genome Biol.">
        <title>Comparative and functional genomics provide insights into the pathogenicity of dermatophytic fungi.</title>
        <authorList>
            <person name="Burmester A."/>
            <person name="Shelest E."/>
            <person name="Gloeckner G."/>
            <person name="Heddergott C."/>
            <person name="Schindler S."/>
            <person name="Staib P."/>
            <person name="Heidel A."/>
            <person name="Felder M."/>
            <person name="Petzold A."/>
            <person name="Szafranski K."/>
            <person name="Feuermann M."/>
            <person name="Pedruzzi I."/>
            <person name="Priebe S."/>
            <person name="Groth M."/>
            <person name="Winkler R."/>
            <person name="Li W."/>
            <person name="Kniemeyer O."/>
            <person name="Schroeckh V."/>
            <person name="Hertweck C."/>
            <person name="Hube B."/>
            <person name="White T.C."/>
            <person name="Platzer M."/>
            <person name="Guthke R."/>
            <person name="Heitman J."/>
            <person name="Woestemeyer J."/>
            <person name="Zipfel P.F."/>
            <person name="Monod M."/>
            <person name="Brakhage A.A."/>
        </authorList>
    </citation>
    <scope>NUCLEOTIDE SEQUENCE [LARGE SCALE GENOMIC DNA]</scope>
    <scope>IDENTIFICATION BY MASS SPECTROMETRY</scope>
    <scope>SUBCELLULAR LOCATION</scope>
    <source>
        <strain>ATCC MYA-4681 / CBS 112371</strain>
    </source>
</reference>
<name>SED4_ARTBC</name>
<comment type="function">
    <text evidence="1">Secreted tripeptidyl-peptidase which degrades proteins at acidic pHs and is involved in virulence.</text>
</comment>
<comment type="catalytic activity">
    <reaction>
        <text>Release of an N-terminal tripeptide from a polypeptide.</text>
        <dbReference type="EC" id="3.4.14.10"/>
    </reaction>
</comment>
<comment type="cofactor">
    <cofactor evidence="1">
        <name>Ca(2+)</name>
        <dbReference type="ChEBI" id="CHEBI:29108"/>
    </cofactor>
    <text evidence="1">Binds 1 Ca(2+) ion per subunit.</text>
</comment>
<comment type="subcellular location">
    <subcellularLocation>
        <location evidence="3">Secreted</location>
        <location evidence="3">Extracellular space</location>
    </subcellularLocation>
</comment>
<feature type="signal peptide" evidence="2">
    <location>
        <begin position="1"/>
        <end position="22"/>
    </location>
</feature>
<feature type="propeptide" id="PRO_0000397835" description="Removed in mature form" evidence="1">
    <location>
        <begin position="23"/>
        <end position="202"/>
    </location>
</feature>
<feature type="chain" id="PRO_0000397836" description="Probable tripeptidyl-peptidase SED4">
    <location>
        <begin position="203"/>
        <end position="600"/>
    </location>
</feature>
<feature type="domain" description="Peptidase S53">
    <location>
        <begin position="212"/>
        <end position="600"/>
    </location>
</feature>
<feature type="active site" description="Charge relay system" evidence="1">
    <location>
        <position position="288"/>
    </location>
</feature>
<feature type="active site" description="Charge relay system" evidence="1">
    <location>
        <position position="292"/>
    </location>
</feature>
<feature type="active site" description="Charge relay system" evidence="1">
    <location>
        <position position="504"/>
    </location>
</feature>
<feature type="binding site" evidence="1">
    <location>
        <position position="546"/>
    </location>
    <ligand>
        <name>Ca(2+)</name>
        <dbReference type="ChEBI" id="CHEBI:29108"/>
    </ligand>
</feature>
<feature type="binding site" evidence="1">
    <location>
        <position position="547"/>
    </location>
    <ligand>
        <name>Ca(2+)</name>
        <dbReference type="ChEBI" id="CHEBI:29108"/>
    </ligand>
</feature>
<feature type="binding site" evidence="1">
    <location>
        <position position="579"/>
    </location>
    <ligand>
        <name>Ca(2+)</name>
        <dbReference type="ChEBI" id="CHEBI:29108"/>
    </ligand>
</feature>
<feature type="binding site" evidence="1">
    <location>
        <position position="581"/>
    </location>
    <ligand>
        <name>Ca(2+)</name>
        <dbReference type="ChEBI" id="CHEBI:29108"/>
    </ligand>
</feature>
<feature type="glycosylation site" description="N-linked (GlcNAc...) asparagine" evidence="2">
    <location>
        <position position="210"/>
    </location>
</feature>
<feature type="glycosylation site" description="N-linked (GlcNAc...) asparagine" evidence="2">
    <location>
        <position position="281"/>
    </location>
</feature>
<feature type="glycosylation site" description="N-linked (GlcNAc...) asparagine" evidence="2">
    <location>
        <position position="323"/>
    </location>
</feature>
<feature type="glycosylation site" description="N-linked (GlcNAc...) asparagine" evidence="2">
    <location>
        <position position="404"/>
    </location>
</feature>
<feature type="glycosylation site" description="N-linked (GlcNAc...) asparagine" evidence="2">
    <location>
        <position position="575"/>
    </location>
</feature>
<protein>
    <recommendedName>
        <fullName>Probable tripeptidyl-peptidase SED4</fullName>
        <ecNumber>3.4.14.10</ecNumber>
    </recommendedName>
    <alternativeName>
        <fullName>Sedolisin-D</fullName>
    </alternativeName>
</protein>
<gene>
    <name type="primary">SED4</name>
    <name type="ORF">ARB_04101</name>
</gene>
<sequence>MVSFTLRAIGACLIGLPALITAAPTSHVSNDFHVVEQLNGVPQGWVQEGSPAPSTQMKFKLALVQGKTAEFEQRVMDISNPKHADYGKFMSREELDAFLQPSSQVKDSVFNWLASEGISKRSVKANTDWLTFTTSIATAEKLFNTRFYTFKNTADGSQIIRTLKYSVAASAAPYVQMVQPTTKFSAPRPELSSVFTSDLEITSSANVDCNVTITPDCIRELYKMGNTFAKKDPRNRLGISGYLEQYARLDDFSTFIDMFVPSLKGTTFDFKSIEGAKNEQNSSLDSVEASLDVDYAIGLSGALSTYYGTAGRGKLIPDLDQPNITENNNEPYIEQLFYLLDLPDSELPAVLSTSYGENEQSVPPTYSSVVCSLFGRLGARGVSVIFSSGDTGVGSACQSNDGKNTTKFNPIFPAACPFVTSVGGTRQINPEVAIHFSSGGFSERFARPWYQELDVRHYLGHELEKGKWDGMYNPYGRGFPDVAAQSYKFATRDHGKTIGVSGTSASAPLFAGVVSILNSIRLAHNKPRMGFLNPWLYTIGRSGFTDIVHGGSDGCTGTDMYSHLPTPYVPGASWNATKGWDPVTGLGTPNFEKLSKLVLI</sequence>